<sequence length="392" mass="44312">MGLLDGNPANETSLVLLLFADFSSMLGCMAVLIGFWRLKLLRNHVTKVIACFCATSFCKDFPSTILTLTNTAVNGGFPCYLYAIVITYGSFACWLWTLCLAISIYMLIVKREPEPERFEKYYYLLCWGLPLISTIVMLAKNTVQFVGNWCWIGVSFTGYRFGLFYGPFLFIWAISAVLVGLTSRYTYVVIHNGVSDNKEKHLTYQFKLINYIIVFLVCWVFAVVNRIVNGLNMFPPALNILHTYLSVSHGFWASVTFIYNNPLMWRYFGAKILTVFTFFGYFTDVQKKLEKNKNNNNPSPYSSSRGTSGKTMGGHPTGDDVQCSSDMEQCSLERHPNMVNNQQNLNNNYGLQQNYNDEGSSSSSLSSSDEEKQTVEMQNIQISTSTNGQGNN</sequence>
<accession>P13773</accession>
<accession>Q557I7</accession>
<organism>
    <name type="scientific">Dictyostelium discoideum</name>
    <name type="common">Social amoeba</name>
    <dbReference type="NCBI Taxonomy" id="44689"/>
    <lineage>
        <taxon>Eukaryota</taxon>
        <taxon>Amoebozoa</taxon>
        <taxon>Evosea</taxon>
        <taxon>Eumycetozoa</taxon>
        <taxon>Dictyostelia</taxon>
        <taxon>Dictyosteliales</taxon>
        <taxon>Dictyosteliaceae</taxon>
        <taxon>Dictyostelium</taxon>
    </lineage>
</organism>
<keyword id="KW-0297">G-protein coupled receptor</keyword>
<keyword id="KW-0325">Glycoprotein</keyword>
<keyword id="KW-0472">Membrane</keyword>
<keyword id="KW-0597">Phosphoprotein</keyword>
<keyword id="KW-0675">Receptor</keyword>
<keyword id="KW-1185">Reference proteome</keyword>
<keyword id="KW-0807">Transducer</keyword>
<keyword id="KW-0812">Transmembrane</keyword>
<keyword id="KW-1133">Transmembrane helix</keyword>
<protein>
    <recommendedName>
        <fullName>Cyclic AMP receptor 1</fullName>
        <shortName>cAMP receptor 1</shortName>
    </recommendedName>
</protein>
<gene>
    <name type="primary">carA-1</name>
    <name type="synonym">car1</name>
    <name type="ORF">DDB_G0273397</name>
</gene>
<gene>
    <name type="primary">carA-2</name>
    <name type="synonym">car1</name>
    <name type="ORF">DDB_G0273533</name>
</gene>
<reference key="1">
    <citation type="journal article" date="1988" name="Science">
        <title>A chemoattractant receptor controls development in Dictyostelium discoideum.</title>
        <authorList>
            <person name="Klein P.S."/>
            <person name="Sun T.J."/>
            <person name="Saxe C.L. III"/>
            <person name="Kimmel A.R."/>
            <person name="Johnson R.L."/>
            <person name="Devreotes P.N."/>
        </authorList>
    </citation>
    <scope>NUCLEOTIDE SEQUENCE [MRNA]</scope>
    <scope>FUNCTION</scope>
</reference>
<reference key="2">
    <citation type="journal article" date="2002" name="Nature">
        <title>Sequence and analysis of chromosome 2 of Dictyostelium discoideum.</title>
        <authorList>
            <person name="Gloeckner G."/>
            <person name="Eichinger L."/>
            <person name="Szafranski K."/>
            <person name="Pachebat J.A."/>
            <person name="Bankier A.T."/>
            <person name="Dear P.H."/>
            <person name="Lehmann R."/>
            <person name="Baumgart C."/>
            <person name="Parra G."/>
            <person name="Abril J.F."/>
            <person name="Guigo R."/>
            <person name="Kumpf K."/>
            <person name="Tunggal B."/>
            <person name="Cox E.C."/>
            <person name="Quail M.A."/>
            <person name="Platzer M."/>
            <person name="Rosenthal A."/>
            <person name="Noegel A.A."/>
        </authorList>
    </citation>
    <scope>NUCLEOTIDE SEQUENCE [LARGE SCALE GENOMIC DNA]</scope>
    <source>
        <strain>AX4</strain>
    </source>
</reference>
<reference key="3">
    <citation type="journal article" date="2005" name="Nature">
        <title>The genome of the social amoeba Dictyostelium discoideum.</title>
        <authorList>
            <person name="Eichinger L."/>
            <person name="Pachebat J.A."/>
            <person name="Gloeckner G."/>
            <person name="Rajandream M.A."/>
            <person name="Sucgang R."/>
            <person name="Berriman M."/>
            <person name="Song J."/>
            <person name="Olsen R."/>
            <person name="Szafranski K."/>
            <person name="Xu Q."/>
            <person name="Tunggal B."/>
            <person name="Kummerfeld S."/>
            <person name="Madera M."/>
            <person name="Konfortov B.A."/>
            <person name="Rivero F."/>
            <person name="Bankier A.T."/>
            <person name="Lehmann R."/>
            <person name="Hamlin N."/>
            <person name="Davies R."/>
            <person name="Gaudet P."/>
            <person name="Fey P."/>
            <person name="Pilcher K."/>
            <person name="Chen G."/>
            <person name="Saunders D."/>
            <person name="Sodergren E.J."/>
            <person name="Davis P."/>
            <person name="Kerhornou A."/>
            <person name="Nie X."/>
            <person name="Hall N."/>
            <person name="Anjard C."/>
            <person name="Hemphill L."/>
            <person name="Bason N."/>
            <person name="Farbrother P."/>
            <person name="Desany B."/>
            <person name="Just E."/>
            <person name="Morio T."/>
            <person name="Rost R."/>
            <person name="Churcher C.M."/>
            <person name="Cooper J."/>
            <person name="Haydock S."/>
            <person name="van Driessche N."/>
            <person name="Cronin A."/>
            <person name="Goodhead I."/>
            <person name="Muzny D.M."/>
            <person name="Mourier T."/>
            <person name="Pain A."/>
            <person name="Lu M."/>
            <person name="Harper D."/>
            <person name="Lindsay R."/>
            <person name="Hauser H."/>
            <person name="James K.D."/>
            <person name="Quiles M."/>
            <person name="Madan Babu M."/>
            <person name="Saito T."/>
            <person name="Buchrieser C."/>
            <person name="Wardroper A."/>
            <person name="Felder M."/>
            <person name="Thangavelu M."/>
            <person name="Johnson D."/>
            <person name="Knights A."/>
            <person name="Loulseged H."/>
            <person name="Mungall K.L."/>
            <person name="Oliver K."/>
            <person name="Price C."/>
            <person name="Quail M.A."/>
            <person name="Urushihara H."/>
            <person name="Hernandez J."/>
            <person name="Rabbinowitsch E."/>
            <person name="Steffen D."/>
            <person name="Sanders M."/>
            <person name="Ma J."/>
            <person name="Kohara Y."/>
            <person name="Sharp S."/>
            <person name="Simmonds M.N."/>
            <person name="Spiegler S."/>
            <person name="Tivey A."/>
            <person name="Sugano S."/>
            <person name="White B."/>
            <person name="Walker D."/>
            <person name="Woodward J.R."/>
            <person name="Winckler T."/>
            <person name="Tanaka Y."/>
            <person name="Shaulsky G."/>
            <person name="Schleicher M."/>
            <person name="Weinstock G.M."/>
            <person name="Rosenthal A."/>
            <person name="Cox E.C."/>
            <person name="Chisholm R.L."/>
            <person name="Gibbs R.A."/>
            <person name="Loomis W.F."/>
            <person name="Platzer M."/>
            <person name="Kay R.R."/>
            <person name="Williams J.G."/>
            <person name="Dear P.H."/>
            <person name="Noegel A.A."/>
            <person name="Barrell B.G."/>
            <person name="Kuspa A."/>
        </authorList>
    </citation>
    <scope>NUCLEOTIDE SEQUENCE [LARGE SCALE GENOMIC DNA]</scope>
    <source>
        <strain>AX4</strain>
    </source>
</reference>
<reference key="4">
    <citation type="journal article" date="1990" name="J. Cell Biol.">
        <title>Surface cAMP receptors mediate multiple responses during development in Dictyostelium: evidenced by antisense mutagenesis.</title>
        <authorList>
            <person name="Sun T.J."/>
            <person name="Van Haastert P.J.M."/>
            <person name="Devreotes P.N."/>
        </authorList>
    </citation>
    <scope>FUNCTION</scope>
    <scope>DEVELOPMENTAL STAGE</scope>
</reference>
<reference key="5">
    <citation type="journal article" date="1991" name="Genes Dev.">
        <title>Expression of a cAMP receptor gene of Dictyostelium and evidence for a multigene family.</title>
        <authorList>
            <person name="Saxe C.L. III"/>
            <person name="Johnson R.L."/>
            <person name="Devreotes P.N."/>
            <person name="Kimmel A.R."/>
        </authorList>
    </citation>
    <scope>DEVELOPMENTAL STAGE</scope>
</reference>
<reference key="6">
    <citation type="journal article" date="1991" name="Genes Dev.">
        <title>Gene targeting of the aggregation stage cAMP receptor cAR1 in Dictyostelium.</title>
        <authorList>
            <person name="Sun T.J."/>
            <person name="Devreotes P.N."/>
        </authorList>
    </citation>
    <scope>FUNCTION</scope>
    <scope>DEVELOPMENTAL STAGE</scope>
</reference>
<reference key="7">
    <citation type="journal article" date="1993" name="Proc. Natl. Acad. Sci. U.S.A.">
        <title>Two transmembrane signaling mechanisms control expression of the cAMP receptor gene CAR1 during Dictyostelium development.</title>
        <authorList>
            <person name="Louis J.M."/>
            <person name="Saxe C.L. III"/>
            <person name="Kimmel A.R."/>
        </authorList>
    </citation>
    <scope>INDUCTION</scope>
</reference>
<reference key="8">
    <citation type="journal article" date="1994" name="Development">
        <title>Extracellular cAMP can restore development in Dictyostelium cells lacking one, but not two subtypes of early cAMP receptors (cARs). Evidence for involvement of cAR1 in aggregative gene expression.</title>
        <authorList>
            <person name="Soede R.D.M."/>
            <person name="Insall R.H."/>
            <person name="Devreotes P.N."/>
            <person name="Schaap P."/>
        </authorList>
    </citation>
    <scope>FUNCTION</scope>
</reference>
<reference key="9">
    <citation type="journal article" date="1994" name="FEBS Lett.">
        <title>Precise expression of the cAMP receptor gene, CAR1, during transition from growth to differentiation in Dictyostelium discoideum.</title>
        <authorList>
            <person name="Abe F."/>
            <person name="Maeda Y."/>
        </authorList>
    </citation>
    <scope>DEVELOPMENTAL STAGE</scope>
</reference>
<reference key="10">
    <citation type="journal article" date="1994" name="J. Biol. Chem.">
        <title>Localization of ligand-induced phosphorylation sites to serine clusters in the C-terminal domain of the Dictyostelium cAMP receptor, cAR1.</title>
        <authorList>
            <person name="Hereld D."/>
            <person name="Vaughan R."/>
            <person name="Kim J.-Y."/>
            <person name="Borleis J.A."/>
            <person name="Devreotes P.N."/>
        </authorList>
    </citation>
    <scope>PHOSPHORYLATION</scope>
    <scope>MUTAGENESIS OF SER-299; SER-302; SER-303; SER-304; SER-308; SER-324; SER-325; SER-331; 360-SER--SER-368; SER-383 AND SER-385</scope>
</reference>
<reference key="11">
    <citation type="journal article" date="1995" name="J. Biol. Chem.">
        <title>Occupancy of the Dictyostelium cAMP receptor, cAR1, induces a reduction in affinity which depends upon COOH-terminal serine residues.</title>
        <authorList>
            <person name="Caterina M.J."/>
            <person name="Hereld D."/>
            <person name="Devreotes P.N."/>
        </authorList>
    </citation>
    <scope>SUBCELLULAR LOCATION</scope>
</reference>
<reference key="12">
    <citation type="journal article" date="1997" name="J. Cell Biol.">
        <title>Dynamic distribution of chemoattractant receptors in living cells during chemotaxis and persistent stimulation.</title>
        <authorList>
            <person name="Xiao Z."/>
            <person name="Zhang N."/>
            <person name="Murphy D.B."/>
            <person name="Devreotes P.N."/>
        </authorList>
    </citation>
    <scope>SUBCELLULAR LOCATION</scope>
</reference>
<reference key="13">
    <citation type="journal article" date="1995" name="J. Biol. Chem.">
        <title>Agonist-induced loss of ligand binding is correlated with phosphorylation of cAR1, a G protein-coupled chemoattractant receptor from Dictyostelium.</title>
        <authorList>
            <person name="Caterina M.J."/>
            <person name="Devreotes P.N."/>
            <person name="Borleis J.A."/>
            <person name="Hereld D."/>
        </authorList>
    </citation>
    <scope>PHOSPHORYLATION AT SER-302; SER-303 AND SER-304</scope>
    <scope>MUTAGENESIS OF SER-299; SER-302; SER-303 AND SER-304</scope>
</reference>
<reference key="14">
    <citation type="journal article" date="1997" name="J. Biol. Chem.">
        <title>Phosphorylation of chemoattractant receptors is not essential for chemotaxis or termination of G-protein-mediated responses.</title>
        <authorList>
            <person name="Kim J.-Y."/>
            <person name="Soede R.D.M."/>
            <person name="Schaap P."/>
            <person name="Valkema R."/>
            <person name="Borleis J.A."/>
            <person name="Van Haastert P.J.M."/>
            <person name="Devreotes P.N."/>
            <person name="Hereld D."/>
        </authorList>
    </citation>
    <scope>FUNCTION</scope>
    <scope>MUTAGENESIS OF 288-LYS--ASN-392</scope>
</reference>
<reference key="15">
    <citation type="journal article" date="1998" name="Dev. Biol.">
        <title>Switching of chemoattractant receptors programs development and morphogenesis in Dictyostelium: receptor subtypes activate common responses at different agonist concentrations.</title>
        <authorList>
            <person name="Kim J.-Y."/>
            <person name="Borleis J.A."/>
            <person name="Devreotes P.N."/>
        </authorList>
    </citation>
    <scope>FUNCTION</scope>
    <scope>MUTAGENESIS OF ASN-148; VAL-154; SER-155; PHE-156 AND THR-157</scope>
</reference>
<reference key="16">
    <citation type="journal article" date="1999" name="J. Biol. Chem.">
        <title>Desensitization of G-protein-coupled receptors. agonist-induced phosphorylation of the chemoattractant receptor cAR1 lowers its intrinsic affinity for cAMP.</title>
        <authorList>
            <person name="Xiao Z."/>
            <person name="Yao Y."/>
            <person name="Long Y."/>
            <person name="Devreotes P.N."/>
        </authorList>
    </citation>
    <scope>PHOSPHORYLATION</scope>
</reference>
<reference key="17">
    <citation type="journal article" date="2001" name="Dev. Biol.">
        <title>The phosphorylated C-terminus of cAR1 plays a role in cell-type-specific gene expression and STATa tyrosine phosphorylation.</title>
        <authorList>
            <person name="Briscoe C."/>
            <person name="Moniakis J."/>
            <person name="Kim J.-Y."/>
            <person name="Brown J.M."/>
            <person name="Hereld D."/>
            <person name="Devreotes P.N."/>
            <person name="Firtel R.A."/>
        </authorList>
    </citation>
    <scope>FUNCTION</scope>
</reference>
<reference key="18">
    <citation type="journal article" date="2001" name="Dev. Growth Differ.">
        <title>Spatial expression patterns of genes involved in cyclic AMP responses in Dictyostelium discoideum development.</title>
        <authorList>
            <person name="Tsujioka M."/>
            <person name="Yokoyama M."/>
            <person name="Nishio K."/>
            <person name="Kuwayama H."/>
            <person name="Morio T."/>
            <person name="Katoh M."/>
            <person name="Urushihara H."/>
            <person name="Saito T."/>
            <person name="Ochiai H."/>
            <person name="Tanaka Y."/>
            <person name="Takeuchi I."/>
            <person name="Maeda M."/>
        </authorList>
    </citation>
    <scope>TISSUE SPECIFICITY</scope>
    <scope>DEVELOPMENTAL STAGE</scope>
</reference>
<reference key="19">
    <citation type="journal article" date="2001" name="J. Cell Sci.">
        <title>cAMP receptor affinity controls wave dynamics, geometry and morphogenesis in Dictyostelium.</title>
        <authorList>
            <person name="Dormann D."/>
            <person name="Kim J.-Y."/>
            <person name="Devreotes P.N."/>
            <person name="Weijer C.J."/>
        </authorList>
    </citation>
    <scope>FUNCTION</scope>
</reference>
<reference key="20">
    <citation type="journal article" date="2002" name="Development">
        <title>A transcriptional profile of multicellular development in Dictyostelium discoideum.</title>
        <authorList>
            <person name="Van Driessche N."/>
            <person name="Shaw C."/>
            <person name="Katoh M."/>
            <person name="Morio T."/>
            <person name="Sucgang R."/>
            <person name="Ibarra M."/>
            <person name="Kuwayama H."/>
            <person name="Saito T."/>
            <person name="Urushihara H."/>
            <person name="Maeda M."/>
            <person name="Takeuchi I."/>
            <person name="Ochiai H."/>
            <person name="Eaton W."/>
            <person name="Tollett J."/>
            <person name="Halter J."/>
            <person name="Kuspa A."/>
            <person name="Tanaka Y."/>
            <person name="Shaulsky G."/>
        </authorList>
    </citation>
    <scope>DEVELOPMENTAL STAGE [LARGE SCALE ANALYSIS]</scope>
</reference>
<reference key="21">
    <citation type="journal article" date="2003" name="Eukaryot. Cell">
        <title>Changing patterns of gene expression in Dictyostelium prestalk cell subtypes recognized by in situ hybridization with genes from microarray analyses.</title>
        <authorList>
            <person name="Maeda M."/>
            <person name="Sakamoto H."/>
            <person name="Iranfar N."/>
            <person name="Fuller D."/>
            <person name="Maruo T."/>
            <person name="Ogihara S."/>
            <person name="Morio T."/>
            <person name="Urushihara H."/>
            <person name="Tanaka Y."/>
            <person name="Loomis W.F."/>
        </authorList>
    </citation>
    <scope>DEVELOPMENTAL STAGE [LARGE SCALE ANALYSIS]</scope>
</reference>
<reference key="22">
    <citation type="journal article" date="2003" name="Eukaryot. Cell">
        <title>Genome-wide expression analyses of gene regulation during early development of Dictyostelium discoideum.</title>
        <authorList>
            <person name="Iranfar N."/>
            <person name="Fuller D."/>
            <person name="Loomis W.F."/>
        </authorList>
    </citation>
    <scope>DEVELOPMENTAL STAGE [LARGE SCALE ANALYSIS]</scope>
</reference>
<reference key="23">
    <citation type="journal article" date="2004" name="Eukaryot. Cell">
        <title>Control of cell type proportioning in Dictyostelium discoideum by differentiation-inducing factor as determined by in situ hybridization.</title>
        <authorList>
            <person name="Maruo T."/>
            <person name="Sakamoto H."/>
            <person name="Iranfar N."/>
            <person name="Fuller D."/>
            <person name="Morio T."/>
            <person name="Urushihara H."/>
            <person name="Tanaka Y."/>
            <person name="Maeda M."/>
            <person name="Loomis W.F."/>
        </authorList>
    </citation>
    <scope>DEVELOPMENTAL STAGE [LARGE SCALE ANALYSIS]</scope>
</reference>
<reference key="24">
    <citation type="journal article" date="2005" name="Mol. Biol. Cell">
        <title>Constitutively active G protein-coupled receptor mutants block dictyostelium development.</title>
        <authorList>
            <person name="Zhang M."/>
            <person name="Goswami M."/>
            <person name="Hereld D."/>
        </authorList>
    </citation>
    <scope>MUTAGENESIS OF LEU-100; ILE-102; ILE-104; VAL-136 AND ASN-225</scope>
</reference>
<reference key="25">
    <citation type="journal article" date="2007" name="Mol. Microbiol.">
        <title>Regulation of G protein-coupled cAMP receptor activation by a hydrophobic residue in transmembrane helix 3.</title>
        <authorList>
            <person name="Zhang M."/>
            <person name="Goswami M."/>
            <person name="Sawai S."/>
            <person name="Cox E.C."/>
            <person name="Hereld D."/>
        </authorList>
    </citation>
    <scope>MUTAGENESIS OF ILE-104</scope>
</reference>
<comment type="function">
    <text evidence="3 5 11 13 15 18 22 23">Receptor for cAMP. Coordinates the aggregation of individual cells into a multicellular organism and regulates the expression of a large number of developmentally regulated genes. The activity of this receptor is mediated by G proteins.</text>
</comment>
<comment type="subcellular location">
    <subcellularLocation>
        <location evidence="17 21">Membrane</location>
        <topology evidence="17 21">Multi-pass membrane protein</topology>
    </subcellularLocation>
</comment>
<comment type="developmental stage">
    <text evidence="4 6 7 8 9 11 13 14 20">Expressed predominantly during early aggregation and at low levels during later stage.</text>
</comment>
<comment type="PTM">
    <text evidence="16 19 24">C-terminal Ser or Thr residues may be phosphorylated.</text>
</comment>
<comment type="similarity">
    <text evidence="25">Belongs to the G-protein coupled receptor 5 family.</text>
</comment>
<comment type="caution">
    <text evidence="25">The gene for this protein is duplicated in strains AX3 and AX4. These strains contain a duplication of a segment of 750 kb of chromosome 2 compared to the corresponding sequence in strain AX2.</text>
</comment>
<feature type="chain" id="PRO_0000195080" description="Cyclic AMP receptor 1">
    <location>
        <begin position="1"/>
        <end position="392"/>
    </location>
</feature>
<feature type="topological domain" description="Extracellular" evidence="1">
    <location>
        <begin position="1"/>
        <end position="13"/>
    </location>
</feature>
<feature type="transmembrane region" description="Helical; Name=1" evidence="1">
    <location>
        <begin position="14"/>
        <end position="33"/>
    </location>
</feature>
<feature type="topological domain" description="Cytoplasmic" evidence="1">
    <location>
        <begin position="34"/>
        <end position="47"/>
    </location>
</feature>
<feature type="transmembrane region" description="Helical; Name=2" evidence="1">
    <location>
        <begin position="48"/>
        <end position="68"/>
    </location>
</feature>
<feature type="topological domain" description="Extracellular" evidence="1">
    <location>
        <begin position="69"/>
        <end position="83"/>
    </location>
</feature>
<feature type="transmembrane region" description="Helical; Name=3" evidence="1">
    <location>
        <begin position="84"/>
        <end position="109"/>
    </location>
</feature>
<feature type="topological domain" description="Cytoplasmic" evidence="1">
    <location>
        <begin position="110"/>
        <end position="120"/>
    </location>
</feature>
<feature type="transmembrane region" description="Helical; Name=4" evidence="1">
    <location>
        <begin position="121"/>
        <end position="139"/>
    </location>
</feature>
<feature type="topological domain" description="Extracellular" evidence="1">
    <location>
        <begin position="140"/>
        <end position="162"/>
    </location>
</feature>
<feature type="transmembrane region" description="Helical; Name=5" evidence="1">
    <location>
        <begin position="163"/>
        <end position="181"/>
    </location>
</feature>
<feature type="topological domain" description="Cytoplasmic" evidence="1">
    <location>
        <begin position="182"/>
        <end position="205"/>
    </location>
</feature>
<feature type="transmembrane region" description="Helical; Name=6" evidence="1">
    <location>
        <begin position="206"/>
        <end position="224"/>
    </location>
</feature>
<feature type="topological domain" description="Extracellular" evidence="1">
    <location>
        <begin position="225"/>
        <end position="235"/>
    </location>
</feature>
<feature type="transmembrane region" description="Helical; Name=7" evidence="1">
    <location>
        <begin position="236"/>
        <end position="260"/>
    </location>
</feature>
<feature type="topological domain" description="Cytoplasmic" evidence="1">
    <location>
        <begin position="261"/>
        <end position="392"/>
    </location>
</feature>
<feature type="region of interest" description="Disordered" evidence="2">
    <location>
        <begin position="292"/>
        <end position="324"/>
    </location>
</feature>
<feature type="region of interest" description="Disordered" evidence="2">
    <location>
        <begin position="339"/>
        <end position="392"/>
    </location>
</feature>
<feature type="compositionally biased region" description="Polar residues" evidence="2">
    <location>
        <begin position="298"/>
        <end position="310"/>
    </location>
</feature>
<feature type="compositionally biased region" description="Low complexity" evidence="2">
    <location>
        <begin position="340"/>
        <end position="367"/>
    </location>
</feature>
<feature type="compositionally biased region" description="Polar residues" evidence="2">
    <location>
        <begin position="375"/>
        <end position="392"/>
    </location>
</feature>
<feature type="modified residue" description="Phosphoserine" evidence="1">
    <location>
        <position position="299"/>
    </location>
</feature>
<feature type="modified residue" description="Phosphoserine" evidence="16">
    <location>
        <position position="302"/>
    </location>
</feature>
<feature type="modified residue" description="Phosphoserine" evidence="16">
    <location>
        <position position="303"/>
    </location>
</feature>
<feature type="modified residue" description="Phosphoserine" evidence="16">
    <location>
        <position position="304"/>
    </location>
</feature>
<feature type="modified residue" description="Phosphoserine" evidence="1">
    <location>
        <position position="308"/>
    </location>
</feature>
<feature type="modified residue" description="Phosphoserine" evidence="1">
    <location>
        <position position="360"/>
    </location>
</feature>
<feature type="modified residue" description="Phosphoserine" evidence="1">
    <location>
        <position position="361"/>
    </location>
</feature>
<feature type="modified residue" description="Phosphoserine" evidence="1">
    <location>
        <position position="362"/>
    </location>
</feature>
<feature type="modified residue" description="Phosphoserine" evidence="1">
    <location>
        <position position="363"/>
    </location>
</feature>
<feature type="modified residue" description="Phosphoserine" evidence="1">
    <location>
        <position position="364"/>
    </location>
</feature>
<feature type="modified residue" description="Phosphoserine" evidence="1">
    <location>
        <position position="366"/>
    </location>
</feature>
<feature type="modified residue" description="Phosphoserine" evidence="1">
    <location>
        <position position="367"/>
    </location>
</feature>
<feature type="modified residue" description="Phosphoserine" evidence="1">
    <location>
        <position position="368"/>
    </location>
</feature>
<feature type="glycosylation site" description="N-linked (GlcNAc...) asparagine" evidence="1">
    <location>
        <position position="10"/>
    </location>
</feature>
<feature type="mutagenesis site" description="In DN3; constitutive phosphorylation and greatly increased affinity for cAMP." evidence="10">
    <original>L</original>
    <variation>H</variation>
    <location>
        <position position="100"/>
    </location>
</feature>
<feature type="mutagenesis site" description="In DN2; constitutive phosphorylation and greatly increased affinity for cAMP; when associated with D-225." evidence="10">
    <original>I</original>
    <variation>T</variation>
    <location>
        <position position="102"/>
    </location>
</feature>
<feature type="mutagenesis site" description="In DN4; constitutive phosphorylation and greatly increased affinity for cAMP. In DN1; Constitutive phosphorylation and greatly increased affinity for cAMP; when associated with A-136." evidence="10 12">
    <original>I</original>
    <variation>N</variation>
    <location>
        <position position="104"/>
    </location>
</feature>
<feature type="mutagenesis site" description="Most substitutions increase affinity for cAMP and the most polar substitutions block development." evidence="10 12">
    <original>I</original>
    <variation>X</variation>
    <location>
        <position position="104"/>
    </location>
</feature>
<feature type="mutagenesis site" description="In DN1; constitutive phosphorylation and greatly increased affinity for cAMP; when associated with N-104." evidence="10">
    <original>V</original>
    <variation>A</variation>
    <location>
        <position position="136"/>
    </location>
</feature>
<feature type="mutagenesis site" description="Reduces the affinity for cAMP by 100 to 1000-fold when associated with D-154; N-155; Y-156 and D-157." evidence="23">
    <original>N</original>
    <variation>G</variation>
    <location>
        <position position="148"/>
    </location>
</feature>
<feature type="mutagenesis site" description="Reduces the affinity for cAMP by 100 to 1000-fold when associated with G-148; N-155; Y-156 and D-157." evidence="23">
    <original>V</original>
    <variation>D</variation>
    <location>
        <position position="154"/>
    </location>
</feature>
<feature type="mutagenesis site" description="Reduces the affinity for cAMP by 100 to 1000-fold when associated with G-148; D-154; Y-156 and D-157." evidence="23">
    <original>S</original>
    <variation>N</variation>
    <location>
        <position position="155"/>
    </location>
</feature>
<feature type="mutagenesis site" description="Reduces the affinity for cAMP by 100 to 1000-fold when associated with G-148; D-154; N-155 and D-157." evidence="23">
    <original>F</original>
    <variation>Y</variation>
    <location>
        <position position="156"/>
    </location>
</feature>
<feature type="mutagenesis site" description="Reduces the affinity for cAMP by 100 to 1000-fold when associated with G-148; D-154; N-155 and Y-156." evidence="23">
    <original>T</original>
    <variation>D</variation>
    <location>
        <position position="157"/>
    </location>
</feature>
<feature type="mutagenesis site" description="In DN2; constitutive phosphorylation and greatly increased affinity for cAMP; when associated with T-102." evidence="10">
    <original>N</original>
    <variation>D</variation>
    <location>
        <position position="225"/>
    </location>
</feature>
<feature type="mutagenesis site" description="No effect on cAMP-dependent gene expression, chemotaxis, aggregation and differentiation." evidence="22">
    <location>
        <begin position="288"/>
        <end position="392"/>
    </location>
</feature>
<feature type="mutagenesis site" description="Greatly reduces ligand induced phosphorylation; when associated with G-302; A-303; G-304 and A-308." evidence="16 19">
    <original>S</original>
    <variation>A</variation>
    <location>
        <position position="299"/>
    </location>
</feature>
<feature type="mutagenesis site" description="Greatly reduces ligand induced phosphorylation; when associated with A-299; A-303; G-304 and A-308." evidence="16 19">
    <original>S</original>
    <variation>G</variation>
    <location>
        <position position="302"/>
    </location>
</feature>
<feature type="mutagenesis site" description="Greatly reduces ligand induced phosphorylation; when associated with A-299; G-302; G-304 and A-308." evidence="16 19">
    <original>S</original>
    <variation>A</variation>
    <location>
        <position position="303"/>
    </location>
</feature>
<feature type="mutagenesis site" description="Greatly reduces ligand induced phosphorylation; when associated with A-299; G-302; A-303 and A-308." evidence="16 19">
    <original>S</original>
    <variation>G</variation>
    <location>
        <position position="304"/>
    </location>
</feature>
<feature type="mutagenesis site" description="Greatly reduces ligand induced phosphorylation; when associated with A-299; G-302; A-303 and G-304." evidence="19">
    <original>S</original>
    <variation>A</variation>
    <location>
        <position position="308"/>
    </location>
</feature>
<feature type="mutagenesis site" description="Slightly reduces ligand induced and basal phosphorylation; when associated with A-325 and A-331." evidence="19">
    <original>S</original>
    <variation>G</variation>
    <location>
        <position position="324"/>
    </location>
</feature>
<feature type="mutagenesis site" description="Slightly reduces ligand induced and basal phosphorylation; when associated with G-324 and A-331." evidence="19">
    <original>S</original>
    <variation>A</variation>
    <location>
        <position position="325"/>
    </location>
</feature>
<feature type="mutagenesis site" description="Slightly reduces ligand induced and basal phosphorylation; when associated with G-324 and A-325." evidence="19">
    <original>S</original>
    <variation>A</variation>
    <location>
        <position position="331"/>
    </location>
</feature>
<feature type="mutagenesis site" description="Greatly reduces basal phosphorylation." evidence="19">
    <location>
        <begin position="360"/>
        <end position="368"/>
    </location>
</feature>
<feature type="mutagenesis site" description="No effect on phosphorylation." evidence="19">
    <original>S</original>
    <variation>A</variation>
    <location>
        <position position="383"/>
    </location>
</feature>
<feature type="mutagenesis site" description="No effect on phosphorylation." evidence="19">
    <original>S</original>
    <variation>A</variation>
    <location>
        <position position="385"/>
    </location>
</feature>
<proteinExistence type="evidence at protein level"/>
<dbReference type="EMBL" id="M21824">
    <property type="protein sequence ID" value="AAA33177.1"/>
    <property type="molecule type" value="mRNA"/>
</dbReference>
<dbReference type="EMBL" id="AAFI02000010">
    <property type="protein sequence ID" value="EAL70653.1"/>
    <property type="molecule type" value="Genomic_DNA"/>
</dbReference>
<dbReference type="EMBL" id="AAFI02000010">
    <property type="protein sequence ID" value="EAL70721.1"/>
    <property type="molecule type" value="Genomic_DNA"/>
</dbReference>
<dbReference type="PIR" id="A41238">
    <property type="entry name" value="A41238"/>
</dbReference>
<dbReference type="RefSeq" id="XP_644603.1">
    <property type="nucleotide sequence ID" value="XM_639511.1"/>
</dbReference>
<dbReference type="RefSeq" id="XP_644648.1">
    <property type="nucleotide sequence ID" value="XM_639556.1"/>
</dbReference>
<dbReference type="SMR" id="P13773"/>
<dbReference type="STRING" id="44689.P13773"/>
<dbReference type="TCDB" id="9.A.14.5.1">
    <property type="family name" value="the g-protein-coupled receptor (gpcr) family"/>
</dbReference>
<dbReference type="GlyCosmos" id="P13773">
    <property type="glycosylation" value="1 site, No reported glycans"/>
</dbReference>
<dbReference type="GlyGen" id="P13773">
    <property type="glycosylation" value="1 site"/>
</dbReference>
<dbReference type="iPTMnet" id="P13773"/>
<dbReference type="PaxDb" id="44689-DDB0185024"/>
<dbReference type="EnsemblProtists" id="EAL70653">
    <property type="protein sequence ID" value="EAL70653"/>
    <property type="gene ID" value="DDB_G0273397"/>
</dbReference>
<dbReference type="EnsemblProtists" id="EAL70721">
    <property type="protein sequence ID" value="EAL70721"/>
    <property type="gene ID" value="DDB_G0273533"/>
</dbReference>
<dbReference type="GeneID" id="8618967"/>
<dbReference type="GeneID" id="8619010"/>
<dbReference type="KEGG" id="ddi:DDB_G0273397"/>
<dbReference type="KEGG" id="ddi:DDB_G0273533"/>
<dbReference type="dictyBase" id="DDB_G0273397">
    <property type="gene designation" value="carA-1"/>
</dbReference>
<dbReference type="dictyBase" id="DDB_G0273533">
    <property type="gene designation" value="carA-2"/>
</dbReference>
<dbReference type="VEuPathDB" id="AmoebaDB:DDB_G0273533"/>
<dbReference type="eggNOG" id="ENOG502RYGP">
    <property type="taxonomic scope" value="Eukaryota"/>
</dbReference>
<dbReference type="HOGENOM" id="CLU_050319_0_0_1"/>
<dbReference type="InParanoid" id="P13773"/>
<dbReference type="OMA" id="IACFCAT"/>
<dbReference type="PhylomeDB" id="P13773"/>
<dbReference type="PRO" id="PR:P13773"/>
<dbReference type="Proteomes" id="UP000002195">
    <property type="component" value="Chromosome 2"/>
</dbReference>
<dbReference type="GO" id="GO:0031252">
    <property type="term" value="C:cell leading edge"/>
    <property type="evidence" value="ECO:0000314"/>
    <property type="project" value="dictyBase"/>
</dbReference>
<dbReference type="GO" id="GO:0009986">
    <property type="term" value="C:cell surface"/>
    <property type="evidence" value="ECO:0000314"/>
    <property type="project" value="dictyBase"/>
</dbReference>
<dbReference type="GO" id="GO:0005829">
    <property type="term" value="C:cytosol"/>
    <property type="evidence" value="ECO:0000314"/>
    <property type="project" value="dictyBase"/>
</dbReference>
<dbReference type="GO" id="GO:0005769">
    <property type="term" value="C:early endosome"/>
    <property type="evidence" value="ECO:0000314"/>
    <property type="project" value="dictyBase"/>
</dbReference>
<dbReference type="GO" id="GO:0005886">
    <property type="term" value="C:plasma membrane"/>
    <property type="evidence" value="ECO:0000314"/>
    <property type="project" value="dictyBase"/>
</dbReference>
<dbReference type="GO" id="GO:0010856">
    <property type="term" value="F:adenylate cyclase activator activity"/>
    <property type="evidence" value="ECO:0000315"/>
    <property type="project" value="dictyBase"/>
</dbReference>
<dbReference type="GO" id="GO:0030552">
    <property type="term" value="F:cAMP binding"/>
    <property type="evidence" value="ECO:0000314"/>
    <property type="project" value="dictyBase"/>
</dbReference>
<dbReference type="GO" id="GO:0001646">
    <property type="term" value="F:cAMP receptor activity"/>
    <property type="evidence" value="ECO:0000314"/>
    <property type="project" value="dictyBase"/>
</dbReference>
<dbReference type="GO" id="GO:0001637">
    <property type="term" value="F:G protein-coupled chemoattractant receptor activity"/>
    <property type="evidence" value="ECO:0000314"/>
    <property type="project" value="dictyBase"/>
</dbReference>
<dbReference type="GO" id="GO:0004930">
    <property type="term" value="F:G protein-coupled receptor activity"/>
    <property type="evidence" value="ECO:0000318"/>
    <property type="project" value="GO_Central"/>
</dbReference>
<dbReference type="GO" id="GO:0030695">
    <property type="term" value="F:GTPase regulator activity"/>
    <property type="evidence" value="ECO:0000314"/>
    <property type="project" value="dictyBase"/>
</dbReference>
<dbReference type="GO" id="GO:0140295">
    <property type="term" value="F:pathogen-derived receptor ligand activity"/>
    <property type="evidence" value="ECO:0000314"/>
    <property type="project" value="dictyBase"/>
</dbReference>
<dbReference type="GO" id="GO:0030295">
    <property type="term" value="F:protein kinase activator activity"/>
    <property type="evidence" value="ECO:0000315"/>
    <property type="project" value="dictyBase"/>
</dbReference>
<dbReference type="GO" id="GO:0023058">
    <property type="term" value="P:adaptation of signaling pathway"/>
    <property type="evidence" value="ECO:0000315"/>
    <property type="project" value="dictyBase"/>
</dbReference>
<dbReference type="GO" id="GO:0140582">
    <property type="term" value="P:adenylate cyclase-activating G protein-coupled cAMP receptor signaling pathway"/>
    <property type="evidence" value="ECO:0000314"/>
    <property type="project" value="dictyBase"/>
</dbReference>
<dbReference type="GO" id="GO:0007189">
    <property type="term" value="P:adenylate cyclase-activating G protein-coupled receptor signaling pathway"/>
    <property type="evidence" value="ECO:0000318"/>
    <property type="project" value="GO_Central"/>
</dbReference>
<dbReference type="GO" id="GO:0031152">
    <property type="term" value="P:aggregation involved in sorocarp development"/>
    <property type="evidence" value="ECO:0000315"/>
    <property type="project" value="UniProtKB"/>
</dbReference>
<dbReference type="GO" id="GO:0097696">
    <property type="term" value="P:cell surface receptor signaling pathway via STAT"/>
    <property type="evidence" value="ECO:0000315"/>
    <property type="project" value="dictyBase"/>
</dbReference>
<dbReference type="GO" id="GO:0019934">
    <property type="term" value="P:cGMP-mediated signaling"/>
    <property type="evidence" value="ECO:0000315"/>
    <property type="project" value="dictyBase"/>
</dbReference>
<dbReference type="GO" id="GO:0006935">
    <property type="term" value="P:chemotaxis"/>
    <property type="evidence" value="ECO:0000315"/>
    <property type="project" value="dictyBase"/>
</dbReference>
<dbReference type="GO" id="GO:0002029">
    <property type="term" value="P:desensitization of G protein-coupled receptor signaling pathway"/>
    <property type="evidence" value="ECO:0000315"/>
    <property type="project" value="UniProtKB"/>
</dbReference>
<dbReference type="GO" id="GO:0070371">
    <property type="term" value="P:ERK1 and ERK2 cascade"/>
    <property type="evidence" value="ECO:0000315"/>
    <property type="project" value="dictyBase"/>
</dbReference>
<dbReference type="GO" id="GO:0140676">
    <property type="term" value="P:oscillatory cAMP signaling"/>
    <property type="evidence" value="ECO:0000314"/>
    <property type="project" value="dictyBase"/>
</dbReference>
<dbReference type="GO" id="GO:0008277">
    <property type="term" value="P:regulation of G protein-coupled receptor signaling pathway"/>
    <property type="evidence" value="ECO:0000314"/>
    <property type="project" value="UniProtKB"/>
</dbReference>
<dbReference type="GO" id="GO:0050764">
    <property type="term" value="P:regulation of phagocytosis"/>
    <property type="evidence" value="ECO:0000315"/>
    <property type="project" value="dictyBase"/>
</dbReference>
<dbReference type="GO" id="GO:1902168">
    <property type="term" value="P:response to catechin"/>
    <property type="evidence" value="ECO:0000314"/>
    <property type="project" value="dictyBase"/>
</dbReference>
<dbReference type="GO" id="GO:1904643">
    <property type="term" value="P:response to curcumin"/>
    <property type="evidence" value="ECO:0000314"/>
    <property type="project" value="dictyBase"/>
</dbReference>
<dbReference type="GO" id="GO:1903013">
    <property type="term" value="P:response to differentiation-inducing factor 1"/>
    <property type="evidence" value="ECO:0007005"/>
    <property type="project" value="dictyBase"/>
</dbReference>
<dbReference type="GO" id="GO:0010225">
    <property type="term" value="P:response to UV-C"/>
    <property type="evidence" value="ECO:0000314"/>
    <property type="project" value="dictyBase"/>
</dbReference>
<dbReference type="CDD" id="cd14940">
    <property type="entry name" value="7tmE_cAMP_R_Slime_mold"/>
    <property type="match status" value="1"/>
</dbReference>
<dbReference type="FunFam" id="1.20.1070.10:FF:000404">
    <property type="entry name" value="Cyclic AMP receptor-like protein A"/>
    <property type="match status" value="1"/>
</dbReference>
<dbReference type="Gene3D" id="1.20.1070.10">
    <property type="entry name" value="Rhodopsin 7-helix transmembrane proteins"/>
    <property type="match status" value="1"/>
</dbReference>
<dbReference type="InterPro" id="IPR022343">
    <property type="entry name" value="GCR1-cAMP_receptor"/>
</dbReference>
<dbReference type="InterPro" id="IPR017981">
    <property type="entry name" value="GPCR_2-like_7TM"/>
</dbReference>
<dbReference type="InterPro" id="IPR000848">
    <property type="entry name" value="GPCR_cAMP"/>
</dbReference>
<dbReference type="PANTHER" id="PTHR23112:SF23">
    <property type="entry name" value="CYCLIC AMP RECEPTOR 1-RELATED"/>
    <property type="match status" value="1"/>
</dbReference>
<dbReference type="PANTHER" id="PTHR23112">
    <property type="entry name" value="G PROTEIN-COUPLED RECEPTOR 157-RELATED"/>
    <property type="match status" value="1"/>
</dbReference>
<dbReference type="Pfam" id="PF05462">
    <property type="entry name" value="Dicty_CAR"/>
    <property type="match status" value="1"/>
</dbReference>
<dbReference type="PRINTS" id="PR02001">
    <property type="entry name" value="GCR1CAMPR"/>
</dbReference>
<dbReference type="PRINTS" id="PR00247">
    <property type="entry name" value="GPCRCAMP"/>
</dbReference>
<dbReference type="SUPFAM" id="SSF81321">
    <property type="entry name" value="Family A G protein-coupled receptor-like"/>
    <property type="match status" value="1"/>
</dbReference>
<dbReference type="PROSITE" id="PS50261">
    <property type="entry name" value="G_PROTEIN_RECEP_F2_4"/>
    <property type="match status" value="1"/>
</dbReference>
<evidence type="ECO:0000255" key="1"/>
<evidence type="ECO:0000256" key="2">
    <source>
        <dbReference type="SAM" id="MobiDB-lite"/>
    </source>
</evidence>
<evidence type="ECO:0000269" key="3">
    <source>
    </source>
</evidence>
<evidence type="ECO:0000269" key="4">
    <source>
    </source>
</evidence>
<evidence type="ECO:0000269" key="5">
    <source>
    </source>
</evidence>
<evidence type="ECO:0000269" key="6">
    <source>
    </source>
</evidence>
<evidence type="ECO:0000269" key="7">
    <source>
    </source>
</evidence>
<evidence type="ECO:0000269" key="8">
    <source>
    </source>
</evidence>
<evidence type="ECO:0000269" key="9">
    <source>
    </source>
</evidence>
<evidence type="ECO:0000269" key="10">
    <source>
    </source>
</evidence>
<evidence type="ECO:0000269" key="11">
    <source>
    </source>
</evidence>
<evidence type="ECO:0000269" key="12">
    <source>
    </source>
</evidence>
<evidence type="ECO:0000269" key="13">
    <source>
    </source>
</evidence>
<evidence type="ECO:0000269" key="14">
    <source>
    </source>
</evidence>
<evidence type="ECO:0000269" key="15">
    <source>
    </source>
</evidence>
<evidence type="ECO:0000269" key="16">
    <source>
    </source>
</evidence>
<evidence type="ECO:0000269" key="17">
    <source>
    </source>
</evidence>
<evidence type="ECO:0000269" key="18">
    <source>
    </source>
</evidence>
<evidence type="ECO:0000269" key="19">
    <source>
    </source>
</evidence>
<evidence type="ECO:0000269" key="20">
    <source>
    </source>
</evidence>
<evidence type="ECO:0000269" key="21">
    <source>
    </source>
</evidence>
<evidence type="ECO:0000269" key="22">
    <source>
    </source>
</evidence>
<evidence type="ECO:0000269" key="23">
    <source>
    </source>
</evidence>
<evidence type="ECO:0000269" key="24">
    <source>
    </source>
</evidence>
<evidence type="ECO:0000305" key="25"/>
<name>CAR1_DICDI</name>